<reference key="1">
    <citation type="journal article" date="2005" name="Nat. Biotechnol.">
        <title>Complete genome sequence of the plant commensal Pseudomonas fluorescens Pf-5.</title>
        <authorList>
            <person name="Paulsen I.T."/>
            <person name="Press C.M."/>
            <person name="Ravel J."/>
            <person name="Kobayashi D.Y."/>
            <person name="Myers G.S.A."/>
            <person name="Mavrodi D.V."/>
            <person name="DeBoy R.T."/>
            <person name="Seshadri R."/>
            <person name="Ren Q."/>
            <person name="Madupu R."/>
            <person name="Dodson R.J."/>
            <person name="Durkin A.S."/>
            <person name="Brinkac L.M."/>
            <person name="Daugherty S.C."/>
            <person name="Sullivan S.A."/>
            <person name="Rosovitz M.J."/>
            <person name="Gwinn M.L."/>
            <person name="Zhou L."/>
            <person name="Schneider D.J."/>
            <person name="Cartinhour S.W."/>
            <person name="Nelson W.C."/>
            <person name="Weidman J."/>
            <person name="Watkins K."/>
            <person name="Tran K."/>
            <person name="Khouri H."/>
            <person name="Pierson E.A."/>
            <person name="Pierson L.S. III"/>
            <person name="Thomashow L.S."/>
            <person name="Loper J.E."/>
        </authorList>
    </citation>
    <scope>NUCLEOTIDE SEQUENCE [LARGE SCALE GENOMIC DNA]</scope>
    <source>
        <strain>ATCC BAA-477 / NRRL B-23932 / Pf-5</strain>
    </source>
</reference>
<comment type="function">
    <text evidence="1">Specifically methylates the N4 position of cytidine in position 1402 (C1402) of 16S rRNA.</text>
</comment>
<comment type="catalytic activity">
    <reaction evidence="1">
        <text>cytidine(1402) in 16S rRNA + S-adenosyl-L-methionine = N(4)-methylcytidine(1402) in 16S rRNA + S-adenosyl-L-homocysteine + H(+)</text>
        <dbReference type="Rhea" id="RHEA:42928"/>
        <dbReference type="Rhea" id="RHEA-COMP:10286"/>
        <dbReference type="Rhea" id="RHEA-COMP:10287"/>
        <dbReference type="ChEBI" id="CHEBI:15378"/>
        <dbReference type="ChEBI" id="CHEBI:57856"/>
        <dbReference type="ChEBI" id="CHEBI:59789"/>
        <dbReference type="ChEBI" id="CHEBI:74506"/>
        <dbReference type="ChEBI" id="CHEBI:82748"/>
        <dbReference type="EC" id="2.1.1.199"/>
    </reaction>
</comment>
<comment type="subcellular location">
    <subcellularLocation>
        <location evidence="1">Cytoplasm</location>
    </subcellularLocation>
</comment>
<comment type="similarity">
    <text evidence="1">Belongs to the methyltransferase superfamily. RsmH family.</text>
</comment>
<feature type="chain" id="PRO_0000223555" description="Ribosomal RNA small subunit methyltransferase H">
    <location>
        <begin position="1"/>
        <end position="315"/>
    </location>
</feature>
<feature type="binding site" evidence="1">
    <location>
        <begin position="37"/>
        <end position="39"/>
    </location>
    <ligand>
        <name>S-adenosyl-L-methionine</name>
        <dbReference type="ChEBI" id="CHEBI:59789"/>
    </ligand>
</feature>
<feature type="binding site" evidence="1">
    <location>
        <position position="57"/>
    </location>
    <ligand>
        <name>S-adenosyl-L-methionine</name>
        <dbReference type="ChEBI" id="CHEBI:59789"/>
    </ligand>
</feature>
<feature type="binding site" evidence="1">
    <location>
        <position position="83"/>
    </location>
    <ligand>
        <name>S-adenosyl-L-methionine</name>
        <dbReference type="ChEBI" id="CHEBI:59789"/>
    </ligand>
</feature>
<feature type="binding site" evidence="1">
    <location>
        <position position="105"/>
    </location>
    <ligand>
        <name>S-adenosyl-L-methionine</name>
        <dbReference type="ChEBI" id="CHEBI:59789"/>
    </ligand>
</feature>
<feature type="binding site" evidence="1">
    <location>
        <position position="112"/>
    </location>
    <ligand>
        <name>S-adenosyl-L-methionine</name>
        <dbReference type="ChEBI" id="CHEBI:59789"/>
    </ligand>
</feature>
<accession>Q4K6I5</accession>
<name>RSMH_PSEF5</name>
<sequence length="315" mass="34468">MTIDSGFNHITVLLDEAVEALAVRPDGCYLDGTFGRGGHSRLILSKLGPQGRLLGFDKDPQAIATGQALAAEDGRFVVVQRSFAELGSEVAERGLAGKVSGVLLDLGVSSPQLDDPERGFSFLNDGPLDMRMDPTRGISAAQFIATAPVEEIARVFKEYGEERFSGRMARAVVERREIQPFERTADLAEVLKVANPAWEKGKNPATRAFQGLRIHVNNELGDLEAGLEAALESLEVGGRLVVISFHSLEDRIVKLFMRRLVKGESDNLPRNLPVRFEAFVPKIKIHGKAQFASEAELKANPRARSAVMRVAEKLR</sequence>
<organism>
    <name type="scientific">Pseudomonas fluorescens (strain ATCC BAA-477 / NRRL B-23932 / Pf-5)</name>
    <dbReference type="NCBI Taxonomy" id="220664"/>
    <lineage>
        <taxon>Bacteria</taxon>
        <taxon>Pseudomonadati</taxon>
        <taxon>Pseudomonadota</taxon>
        <taxon>Gammaproteobacteria</taxon>
        <taxon>Pseudomonadales</taxon>
        <taxon>Pseudomonadaceae</taxon>
        <taxon>Pseudomonas</taxon>
    </lineage>
</organism>
<dbReference type="EC" id="2.1.1.199" evidence="1"/>
<dbReference type="EMBL" id="CP000076">
    <property type="protein sequence ID" value="AAY94297.1"/>
    <property type="molecule type" value="Genomic_DNA"/>
</dbReference>
<dbReference type="SMR" id="Q4K6I5"/>
<dbReference type="STRING" id="220664.PFL_5069"/>
<dbReference type="KEGG" id="pfl:PFL_5069"/>
<dbReference type="PATRIC" id="fig|220664.5.peg.5187"/>
<dbReference type="eggNOG" id="COG0275">
    <property type="taxonomic scope" value="Bacteria"/>
</dbReference>
<dbReference type="HOGENOM" id="CLU_038422_2_0_6"/>
<dbReference type="Proteomes" id="UP000008540">
    <property type="component" value="Chromosome"/>
</dbReference>
<dbReference type="GO" id="GO:0005737">
    <property type="term" value="C:cytoplasm"/>
    <property type="evidence" value="ECO:0007669"/>
    <property type="project" value="UniProtKB-SubCell"/>
</dbReference>
<dbReference type="GO" id="GO:0071424">
    <property type="term" value="F:rRNA (cytosine-N4-)-methyltransferase activity"/>
    <property type="evidence" value="ECO:0007669"/>
    <property type="project" value="UniProtKB-UniRule"/>
</dbReference>
<dbReference type="GO" id="GO:0070475">
    <property type="term" value="P:rRNA base methylation"/>
    <property type="evidence" value="ECO:0007669"/>
    <property type="project" value="UniProtKB-UniRule"/>
</dbReference>
<dbReference type="FunFam" id="1.10.150.170:FF:000003">
    <property type="entry name" value="Ribosomal RNA small subunit methyltransferase H"/>
    <property type="match status" value="1"/>
</dbReference>
<dbReference type="Gene3D" id="1.10.150.170">
    <property type="entry name" value="Putative methyltransferase TM0872, insert domain"/>
    <property type="match status" value="1"/>
</dbReference>
<dbReference type="Gene3D" id="3.40.50.150">
    <property type="entry name" value="Vaccinia Virus protein VP39"/>
    <property type="match status" value="1"/>
</dbReference>
<dbReference type="HAMAP" id="MF_01007">
    <property type="entry name" value="16SrRNA_methyltr_H"/>
    <property type="match status" value="1"/>
</dbReference>
<dbReference type="InterPro" id="IPR002903">
    <property type="entry name" value="RsmH"/>
</dbReference>
<dbReference type="InterPro" id="IPR023397">
    <property type="entry name" value="SAM-dep_MeTrfase_MraW_recog"/>
</dbReference>
<dbReference type="InterPro" id="IPR029063">
    <property type="entry name" value="SAM-dependent_MTases_sf"/>
</dbReference>
<dbReference type="NCBIfam" id="TIGR00006">
    <property type="entry name" value="16S rRNA (cytosine(1402)-N(4))-methyltransferase RsmH"/>
    <property type="match status" value="1"/>
</dbReference>
<dbReference type="PANTHER" id="PTHR11265:SF0">
    <property type="entry name" value="12S RRNA N4-METHYLCYTIDINE METHYLTRANSFERASE"/>
    <property type="match status" value="1"/>
</dbReference>
<dbReference type="PANTHER" id="PTHR11265">
    <property type="entry name" value="S-ADENOSYL-METHYLTRANSFERASE MRAW"/>
    <property type="match status" value="1"/>
</dbReference>
<dbReference type="Pfam" id="PF01795">
    <property type="entry name" value="Methyltransf_5"/>
    <property type="match status" value="1"/>
</dbReference>
<dbReference type="PIRSF" id="PIRSF004486">
    <property type="entry name" value="MraW"/>
    <property type="match status" value="1"/>
</dbReference>
<dbReference type="SUPFAM" id="SSF81799">
    <property type="entry name" value="Putative methyltransferase TM0872, insert domain"/>
    <property type="match status" value="1"/>
</dbReference>
<dbReference type="SUPFAM" id="SSF53335">
    <property type="entry name" value="S-adenosyl-L-methionine-dependent methyltransferases"/>
    <property type="match status" value="1"/>
</dbReference>
<gene>
    <name evidence="1" type="primary">rsmH</name>
    <name type="synonym">mraW</name>
    <name type="ordered locus">PFL_5069</name>
</gene>
<evidence type="ECO:0000255" key="1">
    <source>
        <dbReference type="HAMAP-Rule" id="MF_01007"/>
    </source>
</evidence>
<keyword id="KW-0963">Cytoplasm</keyword>
<keyword id="KW-0489">Methyltransferase</keyword>
<keyword id="KW-0698">rRNA processing</keyword>
<keyword id="KW-0949">S-adenosyl-L-methionine</keyword>
<keyword id="KW-0808">Transferase</keyword>
<proteinExistence type="inferred from homology"/>
<protein>
    <recommendedName>
        <fullName evidence="1">Ribosomal RNA small subunit methyltransferase H</fullName>
        <ecNumber evidence="1">2.1.1.199</ecNumber>
    </recommendedName>
    <alternativeName>
        <fullName evidence="1">16S rRNA m(4)C1402 methyltransferase</fullName>
    </alternativeName>
    <alternativeName>
        <fullName evidence="1">rRNA (cytosine-N(4)-)-methyltransferase RsmH</fullName>
    </alternativeName>
</protein>